<comment type="function">
    <text evidence="1">Promotes RNA polymerase assembly. Latches the N- and C-terminal regions of the beta' subunit thereby facilitating its interaction with the beta and alpha subunits.</text>
</comment>
<comment type="catalytic activity">
    <reaction evidence="1">
        <text>RNA(n) + a ribonucleoside 5'-triphosphate = RNA(n+1) + diphosphate</text>
        <dbReference type="Rhea" id="RHEA:21248"/>
        <dbReference type="Rhea" id="RHEA-COMP:14527"/>
        <dbReference type="Rhea" id="RHEA-COMP:17342"/>
        <dbReference type="ChEBI" id="CHEBI:33019"/>
        <dbReference type="ChEBI" id="CHEBI:61557"/>
        <dbReference type="ChEBI" id="CHEBI:140395"/>
        <dbReference type="EC" id="2.7.7.6"/>
    </reaction>
</comment>
<comment type="subunit">
    <text evidence="1">The RNAP catalytic core consists of 2 alpha, 1 beta, 1 beta' and 1 omega subunit. When a sigma factor is associated with the core the holoenzyme is formed, which can initiate transcription.</text>
</comment>
<comment type="similarity">
    <text evidence="1">Belongs to the RNA polymerase subunit omega family.</text>
</comment>
<evidence type="ECO:0000255" key="1">
    <source>
        <dbReference type="HAMAP-Rule" id="MF_00366"/>
    </source>
</evidence>
<evidence type="ECO:0000256" key="2">
    <source>
        <dbReference type="SAM" id="MobiDB-lite"/>
    </source>
</evidence>
<keyword id="KW-0240">DNA-directed RNA polymerase</keyword>
<keyword id="KW-0548">Nucleotidyltransferase</keyword>
<keyword id="KW-0804">Transcription</keyword>
<keyword id="KW-0808">Transferase</keyword>
<dbReference type="EC" id="2.7.7.6" evidence="1"/>
<dbReference type="EMBL" id="CP000425">
    <property type="protein sequence ID" value="ABJ73630.1"/>
    <property type="molecule type" value="Genomic_DNA"/>
</dbReference>
<dbReference type="RefSeq" id="WP_011676967.1">
    <property type="nucleotide sequence ID" value="NC_008527.1"/>
</dbReference>
<dbReference type="SMR" id="Q02WP2"/>
<dbReference type="KEGG" id="llc:LACR_2157"/>
<dbReference type="HOGENOM" id="CLU_125406_0_0_9"/>
<dbReference type="Proteomes" id="UP000000240">
    <property type="component" value="Chromosome"/>
</dbReference>
<dbReference type="GO" id="GO:0000428">
    <property type="term" value="C:DNA-directed RNA polymerase complex"/>
    <property type="evidence" value="ECO:0007669"/>
    <property type="project" value="UniProtKB-KW"/>
</dbReference>
<dbReference type="GO" id="GO:0003677">
    <property type="term" value="F:DNA binding"/>
    <property type="evidence" value="ECO:0007669"/>
    <property type="project" value="UniProtKB-UniRule"/>
</dbReference>
<dbReference type="GO" id="GO:0003899">
    <property type="term" value="F:DNA-directed RNA polymerase activity"/>
    <property type="evidence" value="ECO:0007669"/>
    <property type="project" value="UniProtKB-UniRule"/>
</dbReference>
<dbReference type="GO" id="GO:0006351">
    <property type="term" value="P:DNA-templated transcription"/>
    <property type="evidence" value="ECO:0007669"/>
    <property type="project" value="UniProtKB-UniRule"/>
</dbReference>
<dbReference type="Gene3D" id="3.90.940.10">
    <property type="match status" value="1"/>
</dbReference>
<dbReference type="HAMAP" id="MF_00366">
    <property type="entry name" value="RNApol_bact_RpoZ"/>
    <property type="match status" value="1"/>
</dbReference>
<dbReference type="InterPro" id="IPR003716">
    <property type="entry name" value="DNA-dir_RNA_pol_omega"/>
</dbReference>
<dbReference type="InterPro" id="IPR006110">
    <property type="entry name" value="Pol_omega/Rpo6/RPB6"/>
</dbReference>
<dbReference type="InterPro" id="IPR036161">
    <property type="entry name" value="RPB6/omega-like_sf"/>
</dbReference>
<dbReference type="NCBIfam" id="TIGR00690">
    <property type="entry name" value="rpoZ"/>
    <property type="match status" value="1"/>
</dbReference>
<dbReference type="PANTHER" id="PTHR34476">
    <property type="entry name" value="DNA-DIRECTED RNA POLYMERASE SUBUNIT OMEGA"/>
    <property type="match status" value="1"/>
</dbReference>
<dbReference type="PANTHER" id="PTHR34476:SF1">
    <property type="entry name" value="DNA-DIRECTED RNA POLYMERASE SUBUNIT OMEGA"/>
    <property type="match status" value="1"/>
</dbReference>
<dbReference type="Pfam" id="PF01192">
    <property type="entry name" value="RNA_pol_Rpb6"/>
    <property type="match status" value="1"/>
</dbReference>
<dbReference type="SMART" id="SM01409">
    <property type="entry name" value="RNA_pol_Rpb6"/>
    <property type="match status" value="1"/>
</dbReference>
<dbReference type="SUPFAM" id="SSF63562">
    <property type="entry name" value="RPB6/omega subunit-like"/>
    <property type="match status" value="1"/>
</dbReference>
<proteinExistence type="inferred from homology"/>
<organism>
    <name type="scientific">Lactococcus lactis subsp. cremoris (strain SK11)</name>
    <dbReference type="NCBI Taxonomy" id="272622"/>
    <lineage>
        <taxon>Bacteria</taxon>
        <taxon>Bacillati</taxon>
        <taxon>Bacillota</taxon>
        <taxon>Bacilli</taxon>
        <taxon>Lactobacillales</taxon>
        <taxon>Streptococcaceae</taxon>
        <taxon>Lactococcus</taxon>
        <taxon>Lactococcus cremoris subsp. cremoris</taxon>
    </lineage>
</organism>
<accession>Q02WP2</accession>
<feature type="chain" id="PRO_1000005949" description="DNA-directed RNA polymerase subunit omega">
    <location>
        <begin position="1"/>
        <end position="117"/>
    </location>
</feature>
<feature type="region of interest" description="Disordered" evidence="2">
    <location>
        <begin position="96"/>
        <end position="117"/>
    </location>
</feature>
<feature type="compositionally biased region" description="Basic and acidic residues" evidence="2">
    <location>
        <begin position="96"/>
        <end position="105"/>
    </location>
</feature>
<feature type="compositionally biased region" description="Low complexity" evidence="2">
    <location>
        <begin position="108"/>
        <end position="117"/>
    </location>
</feature>
<protein>
    <recommendedName>
        <fullName evidence="1">DNA-directed RNA polymerase subunit omega</fullName>
        <shortName evidence="1">RNAP omega subunit</shortName>
        <ecNumber evidence="1">2.7.7.6</ecNumber>
    </recommendedName>
    <alternativeName>
        <fullName evidence="1">RNA polymerase omega subunit</fullName>
    </alternativeName>
    <alternativeName>
        <fullName evidence="1">Transcriptase subunit omega</fullName>
    </alternativeName>
</protein>
<sequence length="117" mass="13449">MMLEPSIDKLLDQVDSKYSLVVLEAKRAHELRDKERPTKEFKSVKRTLQALEEIADGTVKIHPAPELKRETLVEKRELERLQAKMKEQLIKEQIAKEEAEEEAKQKNSRAAKAAAAE</sequence>
<name>RPOZ_LACLS</name>
<reference key="1">
    <citation type="journal article" date="2006" name="Proc. Natl. Acad. Sci. U.S.A.">
        <title>Comparative genomics of the lactic acid bacteria.</title>
        <authorList>
            <person name="Makarova K.S."/>
            <person name="Slesarev A."/>
            <person name="Wolf Y.I."/>
            <person name="Sorokin A."/>
            <person name="Mirkin B."/>
            <person name="Koonin E.V."/>
            <person name="Pavlov A."/>
            <person name="Pavlova N."/>
            <person name="Karamychev V."/>
            <person name="Polouchine N."/>
            <person name="Shakhova V."/>
            <person name="Grigoriev I."/>
            <person name="Lou Y."/>
            <person name="Rohksar D."/>
            <person name="Lucas S."/>
            <person name="Huang K."/>
            <person name="Goodstein D.M."/>
            <person name="Hawkins T."/>
            <person name="Plengvidhya V."/>
            <person name="Welker D."/>
            <person name="Hughes J."/>
            <person name="Goh Y."/>
            <person name="Benson A."/>
            <person name="Baldwin K."/>
            <person name="Lee J.-H."/>
            <person name="Diaz-Muniz I."/>
            <person name="Dosti B."/>
            <person name="Smeianov V."/>
            <person name="Wechter W."/>
            <person name="Barabote R."/>
            <person name="Lorca G."/>
            <person name="Altermann E."/>
            <person name="Barrangou R."/>
            <person name="Ganesan B."/>
            <person name="Xie Y."/>
            <person name="Rawsthorne H."/>
            <person name="Tamir D."/>
            <person name="Parker C."/>
            <person name="Breidt F."/>
            <person name="Broadbent J.R."/>
            <person name="Hutkins R."/>
            <person name="O'Sullivan D."/>
            <person name="Steele J."/>
            <person name="Unlu G."/>
            <person name="Saier M.H. Jr."/>
            <person name="Klaenhammer T."/>
            <person name="Richardson P."/>
            <person name="Kozyavkin S."/>
            <person name="Weimer B.C."/>
            <person name="Mills D.A."/>
        </authorList>
    </citation>
    <scope>NUCLEOTIDE SEQUENCE [LARGE SCALE GENOMIC DNA]</scope>
    <source>
        <strain>SK11</strain>
    </source>
</reference>
<gene>
    <name evidence="1" type="primary">rpoZ</name>
    <name type="ordered locus">LACR_2157</name>
</gene>